<proteinExistence type="evidence at protein level"/>
<comment type="function">
    <text evidence="1">Catalyzes the decarboxylation of 3-oxo-tetronate 4-phosphate to dihydroxyacetone phosphate (DHAP) and CO(2).</text>
</comment>
<comment type="catalytic activity">
    <reaction evidence="1">
        <text>3-dehydro-4-O-phospho-D-erythronate + H(+) = dihydroxyacetone phosphate + CO2</text>
        <dbReference type="Rhea" id="RHEA:52416"/>
        <dbReference type="ChEBI" id="CHEBI:15378"/>
        <dbReference type="ChEBI" id="CHEBI:16526"/>
        <dbReference type="ChEBI" id="CHEBI:57642"/>
        <dbReference type="ChEBI" id="CHEBI:136593"/>
        <dbReference type="EC" id="4.1.1.104"/>
    </reaction>
</comment>
<comment type="catalytic activity">
    <reaction evidence="1">
        <text>3-dehydro-4-O-phospho-L-erythronate + H(+) = dihydroxyacetone phosphate + CO2</text>
        <dbReference type="Rhea" id="RHEA:52404"/>
        <dbReference type="ChEBI" id="CHEBI:15378"/>
        <dbReference type="ChEBI" id="CHEBI:16526"/>
        <dbReference type="ChEBI" id="CHEBI:57642"/>
        <dbReference type="ChEBI" id="CHEBI:136592"/>
        <dbReference type="EC" id="4.1.1.104"/>
    </reaction>
</comment>
<comment type="cofactor">
    <cofactor evidence="2">
        <name>Zn(2+)</name>
        <dbReference type="ChEBI" id="CHEBI:29105"/>
    </cofactor>
    <text evidence="2">Binds 1 zinc ion per subunit.</text>
</comment>
<comment type="similarity">
    <text evidence="3">Belongs to the aldolase class II family. AraD/FucA subfamily.</text>
</comment>
<evidence type="ECO:0000250" key="1">
    <source>
        <dbReference type="UniProtKB" id="A0A0H2VA12"/>
    </source>
</evidence>
<evidence type="ECO:0000250" key="2">
    <source>
        <dbReference type="UniProtKB" id="P0AB87"/>
    </source>
</evidence>
<evidence type="ECO:0000305" key="3"/>
<evidence type="ECO:0007829" key="4">
    <source>
        <dbReference type="PDB" id="6VOP"/>
    </source>
</evidence>
<dbReference type="EC" id="4.1.1.104" evidence="1"/>
<dbReference type="EMBL" id="AF242208">
    <property type="protein sequence ID" value="AAG14969.1"/>
    <property type="molecule type" value="Genomic_DNA"/>
</dbReference>
<dbReference type="EMBL" id="AF242210">
    <property type="protein sequence ID" value="AAG14982.1"/>
    <property type="molecule type" value="Genomic_DNA"/>
</dbReference>
<dbReference type="EMBL" id="U29579">
    <property type="protein sequence ID" value="AAA69248.1"/>
    <property type="molecule type" value="Genomic_DNA"/>
</dbReference>
<dbReference type="EMBL" id="U00096">
    <property type="protein sequence ID" value="AAC75780.1"/>
    <property type="molecule type" value="Genomic_DNA"/>
</dbReference>
<dbReference type="EMBL" id="AP009048">
    <property type="protein sequence ID" value="BAE76815.1"/>
    <property type="molecule type" value="Genomic_DNA"/>
</dbReference>
<dbReference type="PIR" id="F65054">
    <property type="entry name" value="F65054"/>
</dbReference>
<dbReference type="RefSeq" id="NP_417218.1">
    <property type="nucleotide sequence ID" value="NC_000913.3"/>
</dbReference>
<dbReference type="RefSeq" id="WP_001278994.1">
    <property type="nucleotide sequence ID" value="NZ_STEB01000027.1"/>
</dbReference>
<dbReference type="PDB" id="6VOP">
    <property type="method" value="X-ray"/>
    <property type="resolution" value="2.65 A"/>
    <property type="chains" value="A=1-212"/>
</dbReference>
<dbReference type="PDBsum" id="6VOP"/>
<dbReference type="SMR" id="Q46890"/>
<dbReference type="BioGRID" id="4261445">
    <property type="interactions" value="13"/>
</dbReference>
<dbReference type="DIP" id="DIP-12113N"/>
<dbReference type="FunCoup" id="Q46890">
    <property type="interactions" value="245"/>
</dbReference>
<dbReference type="IntAct" id="Q46890">
    <property type="interactions" value="2"/>
</dbReference>
<dbReference type="STRING" id="511145.b2738"/>
<dbReference type="PaxDb" id="511145-b2738"/>
<dbReference type="EnsemblBacteria" id="AAC75780">
    <property type="protein sequence ID" value="AAC75780"/>
    <property type="gene ID" value="b2738"/>
</dbReference>
<dbReference type="GeneID" id="947197"/>
<dbReference type="KEGG" id="ecj:JW2708"/>
<dbReference type="KEGG" id="eco:b2738"/>
<dbReference type="PATRIC" id="fig|1411691.4.peg.4002"/>
<dbReference type="EchoBASE" id="EB2909"/>
<dbReference type="eggNOG" id="COG0235">
    <property type="taxonomic scope" value="Bacteria"/>
</dbReference>
<dbReference type="HOGENOM" id="CLU_006033_3_2_6"/>
<dbReference type="InParanoid" id="Q46890"/>
<dbReference type="OMA" id="ICRYGRS"/>
<dbReference type="OrthoDB" id="5500703at2"/>
<dbReference type="PhylomeDB" id="Q46890"/>
<dbReference type="BioCyc" id="EcoCyc:G7419-MONOMER"/>
<dbReference type="PRO" id="PR:Q46890"/>
<dbReference type="Proteomes" id="UP000000625">
    <property type="component" value="Chromosome"/>
</dbReference>
<dbReference type="GO" id="GO:0005829">
    <property type="term" value="C:cytosol"/>
    <property type="evidence" value="ECO:0000318"/>
    <property type="project" value="GO_Central"/>
</dbReference>
<dbReference type="GO" id="GO:0016832">
    <property type="term" value="F:aldehyde-lyase activity"/>
    <property type="evidence" value="ECO:0000318"/>
    <property type="project" value="GO_Central"/>
</dbReference>
<dbReference type="GO" id="GO:0046872">
    <property type="term" value="F:metal ion binding"/>
    <property type="evidence" value="ECO:0007669"/>
    <property type="project" value="UniProtKB-KW"/>
</dbReference>
<dbReference type="GO" id="GO:0019323">
    <property type="term" value="P:pentose catabolic process"/>
    <property type="evidence" value="ECO:0000318"/>
    <property type="project" value="GO_Central"/>
</dbReference>
<dbReference type="FunFam" id="3.40.225.10:FF:000008">
    <property type="entry name" value="Sugar aldolase"/>
    <property type="match status" value="1"/>
</dbReference>
<dbReference type="Gene3D" id="3.40.225.10">
    <property type="entry name" value="Class II aldolase/adducin N-terminal domain"/>
    <property type="match status" value="1"/>
</dbReference>
<dbReference type="InterPro" id="IPR050197">
    <property type="entry name" value="Aldolase_class_II_sugar_metab"/>
</dbReference>
<dbReference type="InterPro" id="IPR001303">
    <property type="entry name" value="Aldolase_II/adducin_N"/>
</dbReference>
<dbReference type="InterPro" id="IPR036409">
    <property type="entry name" value="Aldolase_II/adducin_N_sf"/>
</dbReference>
<dbReference type="InterPro" id="IPR050013">
    <property type="entry name" value="OtnC"/>
</dbReference>
<dbReference type="NCBIfam" id="NF043034">
    <property type="entry name" value="OxoTetrPhDc"/>
    <property type="match status" value="1"/>
</dbReference>
<dbReference type="NCBIfam" id="NF006000">
    <property type="entry name" value="PRK08130.1"/>
    <property type="match status" value="1"/>
</dbReference>
<dbReference type="PANTHER" id="PTHR22789:SF0">
    <property type="entry name" value="3-OXO-TETRONATE 4-PHOSPHATE DECARBOXYLASE-RELATED"/>
    <property type="match status" value="1"/>
</dbReference>
<dbReference type="PANTHER" id="PTHR22789">
    <property type="entry name" value="FUCULOSE PHOSPHATE ALDOLASE"/>
    <property type="match status" value="1"/>
</dbReference>
<dbReference type="Pfam" id="PF00596">
    <property type="entry name" value="Aldolase_II"/>
    <property type="match status" value="1"/>
</dbReference>
<dbReference type="SMART" id="SM01007">
    <property type="entry name" value="Aldolase_II"/>
    <property type="match status" value="1"/>
</dbReference>
<dbReference type="SUPFAM" id="SSF53639">
    <property type="entry name" value="AraD/HMP-PK domain-like"/>
    <property type="match status" value="1"/>
</dbReference>
<reference key="1">
    <citation type="journal article" date="2000" name="J. Bacteriol.">
        <title>Gene conservation and loss in the mutS-rpoS genomic region of pathogenic Escherichia coli.</title>
        <authorList>
            <person name="Herbelin C.J."/>
            <person name="Chirillo S.C."/>
            <person name="Melnick K.A."/>
            <person name="Whittam T.S."/>
        </authorList>
    </citation>
    <scope>NUCLEOTIDE SEQUENCE [GENOMIC DNA]</scope>
    <source>
        <strain>O111:H- / DEC 12e / CDC 3291-86</strain>
        <strain>O26:NM / DEC 9f / CDC 2666-74</strain>
    </source>
</reference>
<reference key="2">
    <citation type="journal article" date="1997" name="Science">
        <title>The complete genome sequence of Escherichia coli K-12.</title>
        <authorList>
            <person name="Blattner F.R."/>
            <person name="Plunkett G. III"/>
            <person name="Bloch C.A."/>
            <person name="Perna N.T."/>
            <person name="Burland V."/>
            <person name="Riley M."/>
            <person name="Collado-Vides J."/>
            <person name="Glasner J.D."/>
            <person name="Rode C.K."/>
            <person name="Mayhew G.F."/>
            <person name="Gregor J."/>
            <person name="Davis N.W."/>
            <person name="Kirkpatrick H.A."/>
            <person name="Goeden M.A."/>
            <person name="Rose D.J."/>
            <person name="Mau B."/>
            <person name="Shao Y."/>
        </authorList>
    </citation>
    <scope>NUCLEOTIDE SEQUENCE [LARGE SCALE GENOMIC DNA]</scope>
    <source>
        <strain>K12 / MG1655 / ATCC 47076</strain>
    </source>
</reference>
<reference key="3">
    <citation type="journal article" date="2006" name="Mol. Syst. Biol.">
        <title>Highly accurate genome sequences of Escherichia coli K-12 strains MG1655 and W3110.</title>
        <authorList>
            <person name="Hayashi K."/>
            <person name="Morooka N."/>
            <person name="Yamamoto Y."/>
            <person name="Fujita K."/>
            <person name="Isono K."/>
            <person name="Choi S."/>
            <person name="Ohtsubo E."/>
            <person name="Baba T."/>
            <person name="Wanner B.L."/>
            <person name="Mori H."/>
            <person name="Horiuchi T."/>
        </authorList>
    </citation>
    <scope>NUCLEOTIDE SEQUENCE [LARGE SCALE GENOMIC DNA]</scope>
    <source>
        <strain>K12 / W3110 / ATCC 27325 / DSM 5911</strain>
    </source>
</reference>
<sequence length="212" mass="23222">MSDFAKVEQSLREEMTRIASSFFQRGYATGSAGNLSLLLPDGNLLATPTGSCLGNLDPQRLSKVAADGEWLSGDKPSKEVLFHLALYRNNPRCKAVVHLHSTWSTALSCLQGLDSSNVIRPFTPYVVMRMGNVPLVPYYRPGDKRIAQDLAELAADNQAFLLANHGPVVCGESLQEAANNMEELEETAKLIFILGDRPIRYLTAGEIAELRS</sequence>
<feature type="chain" id="PRO_0000162930" description="3-oxo-tetronate 4-phosphate decarboxylase">
    <location>
        <begin position="1"/>
        <end position="212"/>
    </location>
</feature>
<feature type="active site" description="Proton acceptor" evidence="2">
    <location>
        <position position="79"/>
    </location>
</feature>
<feature type="active site" description="Proton donor" evidence="2">
    <location>
        <position position="125"/>
    </location>
</feature>
<feature type="binding site" evidence="2">
    <location>
        <position position="79"/>
    </location>
    <ligand>
        <name>Zn(2+)</name>
        <dbReference type="ChEBI" id="CHEBI:29105"/>
    </ligand>
</feature>
<feature type="binding site" evidence="2">
    <location>
        <position position="98"/>
    </location>
    <ligand>
        <name>Zn(2+)</name>
        <dbReference type="ChEBI" id="CHEBI:29105"/>
    </ligand>
</feature>
<feature type="binding site" evidence="2">
    <location>
        <position position="100"/>
    </location>
    <ligand>
        <name>Zn(2+)</name>
        <dbReference type="ChEBI" id="CHEBI:29105"/>
    </ligand>
</feature>
<feature type="binding site" evidence="2">
    <location>
        <position position="165"/>
    </location>
    <ligand>
        <name>Zn(2+)</name>
        <dbReference type="ChEBI" id="CHEBI:29105"/>
    </ligand>
</feature>
<feature type="helix" evidence="4">
    <location>
        <begin position="7"/>
        <end position="24"/>
    </location>
</feature>
<feature type="strand" evidence="4">
    <location>
        <begin position="27"/>
        <end position="29"/>
    </location>
</feature>
<feature type="strand" evidence="4">
    <location>
        <begin position="32"/>
        <end position="38"/>
    </location>
</feature>
<feature type="strand" evidence="4">
    <location>
        <begin position="44"/>
        <end position="46"/>
    </location>
</feature>
<feature type="helix" evidence="4">
    <location>
        <begin position="53"/>
        <end position="55"/>
    </location>
</feature>
<feature type="helix" evidence="4">
    <location>
        <begin position="58"/>
        <end position="60"/>
    </location>
</feature>
<feature type="strand" evidence="4">
    <location>
        <begin position="62"/>
        <end position="64"/>
    </location>
</feature>
<feature type="strand" evidence="4">
    <location>
        <begin position="70"/>
        <end position="74"/>
    </location>
</feature>
<feature type="helix" evidence="4">
    <location>
        <begin position="80"/>
        <end position="89"/>
    </location>
</feature>
<feature type="strand" evidence="4">
    <location>
        <begin position="95"/>
        <end position="99"/>
    </location>
</feature>
<feature type="helix" evidence="4">
    <location>
        <begin position="102"/>
        <end position="107"/>
    </location>
</feature>
<feature type="strand" evidence="4">
    <location>
        <begin position="122"/>
        <end position="124"/>
    </location>
</feature>
<feature type="helix" evidence="4">
    <location>
        <begin position="125"/>
        <end position="129"/>
    </location>
</feature>
<feature type="helix" evidence="4">
    <location>
        <begin position="144"/>
        <end position="153"/>
    </location>
</feature>
<feature type="strand" evidence="4">
    <location>
        <begin position="158"/>
        <end position="162"/>
    </location>
</feature>
<feature type="turn" evidence="4">
    <location>
        <begin position="163"/>
        <end position="165"/>
    </location>
</feature>
<feature type="strand" evidence="4">
    <location>
        <begin position="166"/>
        <end position="173"/>
    </location>
</feature>
<feature type="helix" evidence="4">
    <location>
        <begin position="174"/>
        <end position="194"/>
    </location>
</feature>
<feature type="helix" evidence="4">
    <location>
        <begin position="204"/>
        <end position="208"/>
    </location>
</feature>
<accession>Q46890</accession>
<accession>Q2MA91</accession>
<gene>
    <name evidence="1" type="primary">otnC</name>
    <name type="synonym">ygbL</name>
    <name type="ordered locus">b2738</name>
    <name type="ordered locus">JW2708</name>
</gene>
<protein>
    <recommendedName>
        <fullName evidence="1">3-oxo-tetronate 4-phosphate decarboxylase</fullName>
        <ecNumber evidence="1">4.1.1.104</ecNumber>
    </recommendedName>
</protein>
<name>OTNC_ECOLI</name>
<keyword id="KW-0002">3D-structure</keyword>
<keyword id="KW-0119">Carbohydrate metabolism</keyword>
<keyword id="KW-0456">Lyase</keyword>
<keyword id="KW-0479">Metal-binding</keyword>
<keyword id="KW-1185">Reference proteome</keyword>
<keyword id="KW-0862">Zinc</keyword>
<organism>
    <name type="scientific">Escherichia coli (strain K12)</name>
    <dbReference type="NCBI Taxonomy" id="83333"/>
    <lineage>
        <taxon>Bacteria</taxon>
        <taxon>Pseudomonadati</taxon>
        <taxon>Pseudomonadota</taxon>
        <taxon>Gammaproteobacteria</taxon>
        <taxon>Enterobacterales</taxon>
        <taxon>Enterobacteriaceae</taxon>
        <taxon>Escherichia</taxon>
    </lineage>
</organism>